<comment type="function">
    <text evidence="1">Converts the preformed base xanthine, a product of nucleic acid breakdown, to xanthosine 5'-monophosphate (XMP), so it can be reused for RNA or DNA synthesis.</text>
</comment>
<comment type="catalytic activity">
    <reaction evidence="1">
        <text>XMP + diphosphate = xanthine + 5-phospho-alpha-D-ribose 1-diphosphate</text>
        <dbReference type="Rhea" id="RHEA:10800"/>
        <dbReference type="ChEBI" id="CHEBI:17712"/>
        <dbReference type="ChEBI" id="CHEBI:33019"/>
        <dbReference type="ChEBI" id="CHEBI:57464"/>
        <dbReference type="ChEBI" id="CHEBI:58017"/>
        <dbReference type="EC" id="2.4.2.22"/>
    </reaction>
</comment>
<comment type="pathway">
    <text evidence="1">Purine metabolism; XMP biosynthesis via salvage pathway; XMP from xanthine: step 1/1.</text>
</comment>
<comment type="subunit">
    <text evidence="1">Homodimer.</text>
</comment>
<comment type="subcellular location">
    <subcellularLocation>
        <location evidence="1">Cytoplasm</location>
    </subcellularLocation>
</comment>
<comment type="similarity">
    <text evidence="1">Belongs to the purine/pyrimidine phosphoribosyltransferase family. Xpt subfamily.</text>
</comment>
<gene>
    <name evidence="1" type="primary">xpt</name>
    <name type="ordered locus">LMOf2365_1914</name>
</gene>
<proteinExistence type="inferred from homology"/>
<keyword id="KW-0963">Cytoplasm</keyword>
<keyword id="KW-0328">Glycosyltransferase</keyword>
<keyword id="KW-0660">Purine salvage</keyword>
<keyword id="KW-0808">Transferase</keyword>
<sequence length="192" mass="20916">MKLLEEFIQEKGTVLPGNVLKVDAFLNHQIDPVLMQAMGNEFAKRFQDLGITKIVTIESSGIAPAVFAGLALSVPVVFARKKKSVTLTDNLFTSTVYSYTKKESNDISVSKQFLTADDTILVIDDFLANGQAALGLLEIAEHAGAKVAGIGIVIEKSFQQGRELLNKTGIPVYSLARIASLENEEILFLEEE</sequence>
<accession>Q71YD1</accession>
<name>XPT_LISMF</name>
<protein>
    <recommendedName>
        <fullName evidence="1">Xanthine phosphoribosyltransferase</fullName>
        <shortName evidence="1">XPRTase</shortName>
        <ecNumber evidence="1">2.4.2.22</ecNumber>
    </recommendedName>
</protein>
<feature type="chain" id="PRO_0000339719" description="Xanthine phosphoribosyltransferase">
    <location>
        <begin position="1"/>
        <end position="192"/>
    </location>
</feature>
<feature type="binding site" evidence="1">
    <location>
        <position position="20"/>
    </location>
    <ligand>
        <name>xanthine</name>
        <dbReference type="ChEBI" id="CHEBI:17712"/>
    </ligand>
</feature>
<feature type="binding site" evidence="1">
    <location>
        <position position="27"/>
    </location>
    <ligand>
        <name>xanthine</name>
        <dbReference type="ChEBI" id="CHEBI:17712"/>
    </ligand>
</feature>
<feature type="binding site" evidence="1">
    <location>
        <begin position="128"/>
        <end position="132"/>
    </location>
    <ligand>
        <name>5-phospho-alpha-D-ribose 1-diphosphate</name>
        <dbReference type="ChEBI" id="CHEBI:58017"/>
    </ligand>
</feature>
<feature type="binding site" evidence="1">
    <location>
        <position position="156"/>
    </location>
    <ligand>
        <name>xanthine</name>
        <dbReference type="ChEBI" id="CHEBI:17712"/>
    </ligand>
</feature>
<reference key="1">
    <citation type="journal article" date="2004" name="Nucleic Acids Res.">
        <title>Whole genome comparisons of serotype 4b and 1/2a strains of the food-borne pathogen Listeria monocytogenes reveal new insights into the core genome components of this species.</title>
        <authorList>
            <person name="Nelson K.E."/>
            <person name="Fouts D.E."/>
            <person name="Mongodin E.F."/>
            <person name="Ravel J."/>
            <person name="DeBoy R.T."/>
            <person name="Kolonay J.F."/>
            <person name="Rasko D.A."/>
            <person name="Angiuoli S.V."/>
            <person name="Gill S.R."/>
            <person name="Paulsen I.T."/>
            <person name="Peterson J.D."/>
            <person name="White O."/>
            <person name="Nelson W.C."/>
            <person name="Nierman W.C."/>
            <person name="Beanan M.J."/>
            <person name="Brinkac L.M."/>
            <person name="Daugherty S.C."/>
            <person name="Dodson R.J."/>
            <person name="Durkin A.S."/>
            <person name="Madupu R."/>
            <person name="Haft D.H."/>
            <person name="Selengut J."/>
            <person name="Van Aken S.E."/>
            <person name="Khouri H.M."/>
            <person name="Fedorova N."/>
            <person name="Forberger H.A."/>
            <person name="Tran B."/>
            <person name="Kathariou S."/>
            <person name="Wonderling L.D."/>
            <person name="Uhlich G.A."/>
            <person name="Bayles D.O."/>
            <person name="Luchansky J.B."/>
            <person name="Fraser C.M."/>
        </authorList>
    </citation>
    <scope>NUCLEOTIDE SEQUENCE [LARGE SCALE GENOMIC DNA]</scope>
    <source>
        <strain>F2365</strain>
    </source>
</reference>
<dbReference type="EC" id="2.4.2.22" evidence="1"/>
<dbReference type="EMBL" id="AE017262">
    <property type="protein sequence ID" value="AAT04683.1"/>
    <property type="molecule type" value="Genomic_DNA"/>
</dbReference>
<dbReference type="RefSeq" id="WP_003728269.1">
    <property type="nucleotide sequence ID" value="NC_002973.6"/>
</dbReference>
<dbReference type="SMR" id="Q71YD1"/>
<dbReference type="KEGG" id="lmf:LMOf2365_1914"/>
<dbReference type="HOGENOM" id="CLU_099015_0_0_9"/>
<dbReference type="UniPathway" id="UPA00602">
    <property type="reaction ID" value="UER00658"/>
</dbReference>
<dbReference type="GO" id="GO:0005737">
    <property type="term" value="C:cytoplasm"/>
    <property type="evidence" value="ECO:0007669"/>
    <property type="project" value="UniProtKB-SubCell"/>
</dbReference>
<dbReference type="GO" id="GO:0000310">
    <property type="term" value="F:xanthine phosphoribosyltransferase activity"/>
    <property type="evidence" value="ECO:0007669"/>
    <property type="project" value="UniProtKB-UniRule"/>
</dbReference>
<dbReference type="GO" id="GO:0006166">
    <property type="term" value="P:purine ribonucleoside salvage"/>
    <property type="evidence" value="ECO:0007669"/>
    <property type="project" value="UniProtKB-KW"/>
</dbReference>
<dbReference type="GO" id="GO:0046110">
    <property type="term" value="P:xanthine metabolic process"/>
    <property type="evidence" value="ECO:0007669"/>
    <property type="project" value="InterPro"/>
</dbReference>
<dbReference type="GO" id="GO:0032265">
    <property type="term" value="P:XMP salvage"/>
    <property type="evidence" value="ECO:0007669"/>
    <property type="project" value="UniProtKB-UniRule"/>
</dbReference>
<dbReference type="CDD" id="cd06223">
    <property type="entry name" value="PRTases_typeI"/>
    <property type="match status" value="1"/>
</dbReference>
<dbReference type="FunFam" id="3.40.50.2020:FF:000027">
    <property type="entry name" value="Xanthine phosphoribosyltransferase"/>
    <property type="match status" value="1"/>
</dbReference>
<dbReference type="Gene3D" id="3.40.50.2020">
    <property type="match status" value="1"/>
</dbReference>
<dbReference type="HAMAP" id="MF_01184">
    <property type="entry name" value="XPRTase"/>
    <property type="match status" value="1"/>
</dbReference>
<dbReference type="InterPro" id="IPR000836">
    <property type="entry name" value="PRibTrfase_dom"/>
</dbReference>
<dbReference type="InterPro" id="IPR029057">
    <property type="entry name" value="PRTase-like"/>
</dbReference>
<dbReference type="InterPro" id="IPR050118">
    <property type="entry name" value="Pur/Pyrimidine_PRTase"/>
</dbReference>
<dbReference type="InterPro" id="IPR010079">
    <property type="entry name" value="Xanthine_PRibTrfase"/>
</dbReference>
<dbReference type="NCBIfam" id="NF006671">
    <property type="entry name" value="PRK09219.1"/>
    <property type="match status" value="1"/>
</dbReference>
<dbReference type="NCBIfam" id="TIGR01744">
    <property type="entry name" value="XPRTase"/>
    <property type="match status" value="1"/>
</dbReference>
<dbReference type="PANTHER" id="PTHR43864">
    <property type="entry name" value="HYPOXANTHINE/GUANINE PHOSPHORIBOSYLTRANSFERASE"/>
    <property type="match status" value="1"/>
</dbReference>
<dbReference type="PANTHER" id="PTHR43864:SF1">
    <property type="entry name" value="XANTHINE PHOSPHORIBOSYLTRANSFERASE"/>
    <property type="match status" value="1"/>
</dbReference>
<dbReference type="Pfam" id="PF00156">
    <property type="entry name" value="Pribosyltran"/>
    <property type="match status" value="1"/>
</dbReference>
<dbReference type="SUPFAM" id="SSF53271">
    <property type="entry name" value="PRTase-like"/>
    <property type="match status" value="1"/>
</dbReference>
<evidence type="ECO:0000255" key="1">
    <source>
        <dbReference type="HAMAP-Rule" id="MF_01184"/>
    </source>
</evidence>
<organism>
    <name type="scientific">Listeria monocytogenes serotype 4b (strain F2365)</name>
    <dbReference type="NCBI Taxonomy" id="265669"/>
    <lineage>
        <taxon>Bacteria</taxon>
        <taxon>Bacillati</taxon>
        <taxon>Bacillota</taxon>
        <taxon>Bacilli</taxon>
        <taxon>Bacillales</taxon>
        <taxon>Listeriaceae</taxon>
        <taxon>Listeria</taxon>
    </lineage>
</organism>